<accession>Q8T295</accession>
<accession>Q554T3</accession>
<name>PRP8_DICDI</name>
<comment type="function">
    <text evidence="2">Functions as a scaffold that mediates the ordered assembly of spliceosomal proteins and snRNAs. Required for the assembly of the U4/U6-U5 tri-snRNP complex. Functions as a scaffold that positions spliceosomal U2, U5 and U6 snRNAs at splice sites on pre-mRNA substrates, so that splicing can occur. Interacts with both the 5' and the 3' splice site.</text>
</comment>
<comment type="subunit">
    <text evidence="1">Part of the U5 snRNP complex and of the U4/U6-U5 tri-snRNP complex.</text>
</comment>
<comment type="subcellular location">
    <subcellularLocation>
        <location evidence="1">Nucleus speckle</location>
    </subcellularLocation>
</comment>
<comment type="domain">
    <text evidence="1">The MPN (JAB/Mov34) domain has structural similarity with deubiquitinating enzymes, but lacks the residues that would bind the catalytic metal ion.</text>
</comment>
<comment type="domain">
    <text evidence="1">Contains a region with structural similarity to reverse transcriptase, presenting the classical thumb, fingers and palm architecture, but lacks enzyme activity, since the essential metal-binding residues are not conserved.</text>
</comment>
<comment type="domain">
    <text evidence="1">Contains a region with structural similarity to type-2 restriction endonucleases, but the residues that would bind catalytic metal ions in endonucleases are instead involved in hydrogen bonds that stabilize the protein structure.</text>
</comment>
<comment type="domain">
    <text evidence="1">Contains a region with structural similarity to RNase H, but lacks RNase H activity.</text>
</comment>
<evidence type="ECO:0000250" key="1"/>
<evidence type="ECO:0000250" key="2">
    <source>
        <dbReference type="UniProtKB" id="Q99PV0"/>
    </source>
</evidence>
<evidence type="ECO:0000255" key="3">
    <source>
        <dbReference type="PROSITE-ProRule" id="PRU01182"/>
    </source>
</evidence>
<evidence type="ECO:0000256" key="4">
    <source>
        <dbReference type="SAM" id="MobiDB-lite"/>
    </source>
</evidence>
<sequence>MDDTNSNINQSNESQHLEEKAKKWIQLNNKKYSEKRKFGAVEIRKEDMPPEHLRKIIKDHGDMSNRRFRDDKRVYLGALKYMPHAILKLLENIPMPWEQVKYVKVLYHLSGAITFVNEIPFVIEPIYIAQWATMWVTMRREKRDRTHFRRMKFPLFDDEEPPLDYSDNILDNEVEDPIQMELDENDDSEVIDWLYDSKPLVNTKFVNGSSYRKWRLNLPIMSTLFRLASPLLSDLTDSNYFYLFDDNSFFTSKALNMAIPGGPKFEPLFRDVDDDDEDWNEFNDINKVIIRNKIRTEYKIAFPYLYNSRPRKVKTPTYHTPNNCYIKNDSPDLPGFYFGAALNPIPSYKTSGNKNEQSEYGTEDDEFQLPEEIETILSKTEIEHDNLANGIQLYWAPRPFSLRSGTTRRAEDIPLVKSWYKEHCPSEHPVKVRVSYQKLLKCHVLNKLHHRKPKAQTKRNLFKSLKATKFFQSTEIDWVEAGLQVCRQGYNMLNLLIHRKNLNYLHLDYNFYLKPIKTLTTKERKKSRFGNAFHLCREILRLTKLVVDVHVKFRLGDADAFQLADAIQYLFSHLGLLTGMYKYKYRLMRQIRMCKDLKHLIYYRFNTGAVGKGPGCGFWAPMWRVWLFFLRGIVPLLERWLGNLLARQFEGRQTKGMAKTVTKQRVESHFDYELRAAVMHDILDMMPEGIKANKSRIILQHLSEAWRCWKSNIPWKVPGLPIPIENMILRYVKSKADWWTNIAHYNRERIKRGATIDKTASKKNLGRLTRLWLKAEQERQHNYLKDGPYVSAEEAVAIYTTTVHWLEKRRFSAIPFPQTSYKHDIKILTLALERLKEAYSVKSRLNQSQREELSLVEQAYDNPHDALARIKRHLLTQRTFKEVGIEFMDMYTHLVPIYDVDPFEKITDAYLDQYLWYEADKRQLFPNWVKPSDNEPPPVLIHKWCQGINNLDQVWETSQGECVVLLETQFSKVYEKMDLTLMNRLLRLIVDQNIADYMSGKNNVVINYKDMNHTNSYGLIRGLQFASFIFQYYGLVLDLLVLGLERASALAGPPNLPNSFLTFPSVQTETAHPIRLYSRYVDRIHVLYKFTADEARKLIQKYMSEHPDPNNENVVGYNNKKCWPRDCRMRLMKHDVNLGRAVFWQIKNRLPRSLTTIDWEDSFVSVYSKDNPNLLMNMAGFDIRILPKCRTPLDQLAPKDAVWSLQNVNTKERTAQAFLRVDTESQERFENRIRMILMASGSTTFTKIVNKWNTALIGLMTYYREAVVTTREMLDILVRCENKIQTRVKIGLNSKMPNRFPPVVFYTPKELGGLGMLSMGHVLIPQSDLKYSKQTDTGITHFTSGMSHDEDQLIPNLYRYIQPWEQEIKDSQRVWAEYAIKYEEAKSQNKNLTLEDLEDSWDRGIPRINTLFQKSRHTLAYDKGWRVRTDWKQYQVLKNNPFWWTNQRHDGKLWNLNNYRTDIIQALGGVEGILEHTLFKGTYFPTWEGLFWEKASGFEESMKYKKLTHAQRSGLNQIPNRRFTLWWSPTINRKNVYVGFQVQLDLTGIFMHGKIPTLKISLIQIFRAHLWQKIHESLVMDLCQVFDQELDNLEISVVNKEAIHPRKSYKMNSSCADILLRATHKWQVSRPSLLNDNRDTYDNTTTQYWLDVQLKWGDFDSHDIERYSRAKFLDYTTDSMSLYPSPTGCLIGLDLAYNIYSSFGNWFLGVKPLVQKAMAKILKSNPALYVLRERIRKGLQLYSSEPTEPYLSSQNFGELFSNKIMWFVDDSNVYRVTIHKTFEGNLTTKPINGAIFIFNPRTGQLFLKIIHTDVWLGQKRLGQLAKWKTAEEVAALIRSLPVEEQPKQIIATRKGMMDPLEVHLLDFPNIVIQGSELQLPFQACLKVEKFGDLILKATEPKMVLFNIYDDWLSTIHSYTAFLRLILILRALHVNLERTKIILKPNKNVITQPHHIWPTLTEQEWLTVEGSLKDLILADFGKRNNVNVASLTQSEIRDIILGMEISAPSQQREDQIAEIEKQKTEASHLTAVTVRSTNIHGEEIITTATSPHEQKVFSSKTDWRVRAISATNLHLRTNQIYVNSDNAKETGGFTYVFPKNILKKFITIADLRTQIMGYCYGISPPDNPSVKEIRCIVMPPQWGTPVHVTVPNQLPEHEYLKDLEPLGWIHTQPTELPQLSPQDVITHSKIMSDNKSWDGEKTVIISVSVAWPCTLTAYHLTPSGFEWGKNNKDSLNYQGYQPQFYEKVQMLLSDRFLGFYMVPDRGSWNYNFMGVKHSTNMTYGLKLDYPKNFYDESHRPAHFQNWTQMAPSANDDEENQPENENLFE</sequence>
<dbReference type="EMBL" id="AAFI02000012">
    <property type="protein sequence ID" value="EAL70007.1"/>
    <property type="molecule type" value="Genomic_DNA"/>
</dbReference>
<dbReference type="RefSeq" id="XP_644240.1">
    <property type="nucleotide sequence ID" value="XM_639148.1"/>
</dbReference>
<dbReference type="SMR" id="Q8T295"/>
<dbReference type="FunCoup" id="Q8T295">
    <property type="interactions" value="1260"/>
</dbReference>
<dbReference type="STRING" id="44689.Q8T295"/>
<dbReference type="PaxDb" id="44689-DDB0233128"/>
<dbReference type="EnsemblProtists" id="EAL70007">
    <property type="protein sequence ID" value="EAL70007"/>
    <property type="gene ID" value="DDB_G0274229"/>
</dbReference>
<dbReference type="GeneID" id="8619668"/>
<dbReference type="KEGG" id="ddi:DDB_G0274229"/>
<dbReference type="dictyBase" id="DDB_G0274229">
    <property type="gene designation" value="prpf8"/>
</dbReference>
<dbReference type="VEuPathDB" id="AmoebaDB:DDB_G0274229"/>
<dbReference type="eggNOG" id="KOG1795">
    <property type="taxonomic scope" value="Eukaryota"/>
</dbReference>
<dbReference type="HOGENOM" id="CLU_000380_3_0_1"/>
<dbReference type="InParanoid" id="Q8T295"/>
<dbReference type="OMA" id="ANKWNTS"/>
<dbReference type="PhylomeDB" id="Q8T295"/>
<dbReference type="Reactome" id="R-DDI-72163">
    <property type="pathway name" value="mRNA Splicing - Major Pathway"/>
</dbReference>
<dbReference type="PRO" id="PR:Q8T295"/>
<dbReference type="Proteomes" id="UP000002195">
    <property type="component" value="Chromosome 2"/>
</dbReference>
<dbReference type="GO" id="GO:0071013">
    <property type="term" value="C:catalytic step 2 spliceosome"/>
    <property type="evidence" value="ECO:0000318"/>
    <property type="project" value="GO_Central"/>
</dbReference>
<dbReference type="GO" id="GO:0016607">
    <property type="term" value="C:nuclear speck"/>
    <property type="evidence" value="ECO:0007669"/>
    <property type="project" value="UniProtKB-SubCell"/>
</dbReference>
<dbReference type="GO" id="GO:0005682">
    <property type="term" value="C:U5 snRNP"/>
    <property type="evidence" value="ECO:0000318"/>
    <property type="project" value="GO_Central"/>
</dbReference>
<dbReference type="GO" id="GO:0008237">
    <property type="term" value="F:metallopeptidase activity"/>
    <property type="evidence" value="ECO:0007669"/>
    <property type="project" value="InterPro"/>
</dbReference>
<dbReference type="GO" id="GO:0097157">
    <property type="term" value="F:pre-mRNA intronic binding"/>
    <property type="evidence" value="ECO:0000318"/>
    <property type="project" value="GO_Central"/>
</dbReference>
<dbReference type="GO" id="GO:0030619">
    <property type="term" value="F:U1 snRNA binding"/>
    <property type="evidence" value="ECO:0000318"/>
    <property type="project" value="GO_Central"/>
</dbReference>
<dbReference type="GO" id="GO:0030620">
    <property type="term" value="F:U2 snRNA binding"/>
    <property type="evidence" value="ECO:0000318"/>
    <property type="project" value="GO_Central"/>
</dbReference>
<dbReference type="GO" id="GO:0030623">
    <property type="term" value="F:U5 snRNA binding"/>
    <property type="evidence" value="ECO:0000318"/>
    <property type="project" value="GO_Central"/>
</dbReference>
<dbReference type="GO" id="GO:0017070">
    <property type="term" value="F:U6 snRNA binding"/>
    <property type="evidence" value="ECO:0000318"/>
    <property type="project" value="GO_Central"/>
</dbReference>
<dbReference type="GO" id="GO:0006397">
    <property type="term" value="P:mRNA processing"/>
    <property type="evidence" value="ECO:0000250"/>
    <property type="project" value="dictyBase"/>
</dbReference>
<dbReference type="GO" id="GO:0008380">
    <property type="term" value="P:RNA splicing"/>
    <property type="evidence" value="ECO:0000250"/>
    <property type="project" value="dictyBase"/>
</dbReference>
<dbReference type="GO" id="GO:0000244">
    <property type="term" value="P:spliceosomal tri-snRNP complex assembly"/>
    <property type="evidence" value="ECO:0000318"/>
    <property type="project" value="GO_Central"/>
</dbReference>
<dbReference type="CDD" id="cd08056">
    <property type="entry name" value="MPN_PRP8"/>
    <property type="match status" value="1"/>
</dbReference>
<dbReference type="CDD" id="cd13838">
    <property type="entry name" value="RNase_H_like_Prp8_IV"/>
    <property type="match status" value="1"/>
</dbReference>
<dbReference type="FunFam" id="1.20.80.40:FF:000001">
    <property type="entry name" value="Pre-mRNA-processing-splicing factor 8"/>
    <property type="match status" value="1"/>
</dbReference>
<dbReference type="FunFam" id="3.30.420.230:FF:000001">
    <property type="entry name" value="Pre-mRNA-processing-splicing factor 8"/>
    <property type="match status" value="1"/>
</dbReference>
<dbReference type="FunFam" id="3.30.43.40:FF:000001">
    <property type="entry name" value="Pre-mRNA-processing-splicing factor 8"/>
    <property type="match status" value="1"/>
</dbReference>
<dbReference type="FunFam" id="3.40.140.10:FF:000002">
    <property type="entry name" value="Pre-mRNA-processing-splicing factor 8"/>
    <property type="match status" value="1"/>
</dbReference>
<dbReference type="FunFam" id="3.90.1570.40:FF:000001">
    <property type="entry name" value="Pre-mRNA-processing-splicing factor 8"/>
    <property type="match status" value="1"/>
</dbReference>
<dbReference type="Gene3D" id="1.20.80.40">
    <property type="match status" value="1"/>
</dbReference>
<dbReference type="Gene3D" id="3.30.420.230">
    <property type="match status" value="1"/>
</dbReference>
<dbReference type="Gene3D" id="3.90.1570.40">
    <property type="match status" value="1"/>
</dbReference>
<dbReference type="Gene3D" id="3.40.140.10">
    <property type="entry name" value="Cytidine Deaminase, domain 2"/>
    <property type="match status" value="1"/>
</dbReference>
<dbReference type="Gene3D" id="3.30.43.40">
    <property type="entry name" value="Pre-mRNA-processing-splicing factor 8, U5-snRNA-binding domain"/>
    <property type="match status" value="1"/>
</dbReference>
<dbReference type="InterPro" id="IPR000555">
    <property type="entry name" value="JAMM/MPN+_dom"/>
</dbReference>
<dbReference type="InterPro" id="IPR037518">
    <property type="entry name" value="MPN"/>
</dbReference>
<dbReference type="InterPro" id="IPR012591">
    <property type="entry name" value="PRO8NT"/>
</dbReference>
<dbReference type="InterPro" id="IPR012592">
    <property type="entry name" value="PROCN"/>
</dbReference>
<dbReference type="InterPro" id="IPR012984">
    <property type="entry name" value="PROCT"/>
</dbReference>
<dbReference type="InterPro" id="IPR027652">
    <property type="entry name" value="PRP8"/>
</dbReference>
<dbReference type="InterPro" id="IPR021983">
    <property type="entry name" value="PRP8_domainIV"/>
</dbReference>
<dbReference type="InterPro" id="IPR043173">
    <property type="entry name" value="Prp8_domainIV_fingers"/>
</dbReference>
<dbReference type="InterPro" id="IPR043172">
    <property type="entry name" value="Prp8_domainIV_palm"/>
</dbReference>
<dbReference type="InterPro" id="IPR019581">
    <property type="entry name" value="Prp8_U5-snRNA-bd"/>
</dbReference>
<dbReference type="InterPro" id="IPR042516">
    <property type="entry name" value="Prp8_U5-snRNA-bd_sf"/>
</dbReference>
<dbReference type="InterPro" id="IPR019580">
    <property type="entry name" value="Prp8_U6-snRNA-bd"/>
</dbReference>
<dbReference type="InterPro" id="IPR012337">
    <property type="entry name" value="RNaseH-like_sf"/>
</dbReference>
<dbReference type="InterPro" id="IPR019582">
    <property type="entry name" value="RRM_spliceosomal_PrP8"/>
</dbReference>
<dbReference type="PANTHER" id="PTHR11140">
    <property type="entry name" value="PRE-MRNA SPLICING FACTOR PRP8"/>
    <property type="match status" value="1"/>
</dbReference>
<dbReference type="PANTHER" id="PTHR11140:SF0">
    <property type="entry name" value="PRE-MRNA-PROCESSING-SPLICING FACTOR 8"/>
    <property type="match status" value="1"/>
</dbReference>
<dbReference type="Pfam" id="PF01398">
    <property type="entry name" value="JAB"/>
    <property type="match status" value="1"/>
</dbReference>
<dbReference type="Pfam" id="PF08082">
    <property type="entry name" value="PRO8NT"/>
    <property type="match status" value="1"/>
</dbReference>
<dbReference type="Pfam" id="PF08083">
    <property type="entry name" value="PROCN"/>
    <property type="match status" value="1"/>
</dbReference>
<dbReference type="Pfam" id="PF08084">
    <property type="entry name" value="PROCT"/>
    <property type="match status" value="1"/>
</dbReference>
<dbReference type="Pfam" id="PF12134">
    <property type="entry name" value="PRP8_domainIV"/>
    <property type="match status" value="1"/>
</dbReference>
<dbReference type="Pfam" id="PF10598">
    <property type="entry name" value="RRM_4"/>
    <property type="match status" value="1"/>
</dbReference>
<dbReference type="Pfam" id="PF10597">
    <property type="entry name" value="U5_2-snRNA_bdg"/>
    <property type="match status" value="1"/>
</dbReference>
<dbReference type="Pfam" id="PF10596">
    <property type="entry name" value="U6-snRNA_bdg"/>
    <property type="match status" value="1"/>
</dbReference>
<dbReference type="SMART" id="SM00232">
    <property type="entry name" value="JAB_MPN"/>
    <property type="match status" value="1"/>
</dbReference>
<dbReference type="SUPFAM" id="SSF53098">
    <property type="entry name" value="Ribonuclease H-like"/>
    <property type="match status" value="2"/>
</dbReference>
<dbReference type="PROSITE" id="PS50249">
    <property type="entry name" value="MPN"/>
    <property type="match status" value="1"/>
</dbReference>
<reference key="1">
    <citation type="journal article" date="2002" name="Nature">
        <title>Sequence and analysis of chromosome 2 of Dictyostelium discoideum.</title>
        <authorList>
            <person name="Gloeckner G."/>
            <person name="Eichinger L."/>
            <person name="Szafranski K."/>
            <person name="Pachebat J.A."/>
            <person name="Bankier A.T."/>
            <person name="Dear P.H."/>
            <person name="Lehmann R."/>
            <person name="Baumgart C."/>
            <person name="Parra G."/>
            <person name="Abril J.F."/>
            <person name="Guigo R."/>
            <person name="Kumpf K."/>
            <person name="Tunggal B."/>
            <person name="Cox E.C."/>
            <person name="Quail M.A."/>
            <person name="Platzer M."/>
            <person name="Rosenthal A."/>
            <person name="Noegel A.A."/>
        </authorList>
    </citation>
    <scope>NUCLEOTIDE SEQUENCE [LARGE SCALE GENOMIC DNA]</scope>
    <source>
        <strain>AX4</strain>
    </source>
</reference>
<reference key="2">
    <citation type="journal article" date="2005" name="Nature">
        <title>The genome of the social amoeba Dictyostelium discoideum.</title>
        <authorList>
            <person name="Eichinger L."/>
            <person name="Pachebat J.A."/>
            <person name="Gloeckner G."/>
            <person name="Rajandream M.A."/>
            <person name="Sucgang R."/>
            <person name="Berriman M."/>
            <person name="Song J."/>
            <person name="Olsen R."/>
            <person name="Szafranski K."/>
            <person name="Xu Q."/>
            <person name="Tunggal B."/>
            <person name="Kummerfeld S."/>
            <person name="Madera M."/>
            <person name="Konfortov B.A."/>
            <person name="Rivero F."/>
            <person name="Bankier A.T."/>
            <person name="Lehmann R."/>
            <person name="Hamlin N."/>
            <person name="Davies R."/>
            <person name="Gaudet P."/>
            <person name="Fey P."/>
            <person name="Pilcher K."/>
            <person name="Chen G."/>
            <person name="Saunders D."/>
            <person name="Sodergren E.J."/>
            <person name="Davis P."/>
            <person name="Kerhornou A."/>
            <person name="Nie X."/>
            <person name="Hall N."/>
            <person name="Anjard C."/>
            <person name="Hemphill L."/>
            <person name="Bason N."/>
            <person name="Farbrother P."/>
            <person name="Desany B."/>
            <person name="Just E."/>
            <person name="Morio T."/>
            <person name="Rost R."/>
            <person name="Churcher C.M."/>
            <person name="Cooper J."/>
            <person name="Haydock S."/>
            <person name="van Driessche N."/>
            <person name="Cronin A."/>
            <person name="Goodhead I."/>
            <person name="Muzny D.M."/>
            <person name="Mourier T."/>
            <person name="Pain A."/>
            <person name="Lu M."/>
            <person name="Harper D."/>
            <person name="Lindsay R."/>
            <person name="Hauser H."/>
            <person name="James K.D."/>
            <person name="Quiles M."/>
            <person name="Madan Babu M."/>
            <person name="Saito T."/>
            <person name="Buchrieser C."/>
            <person name="Wardroper A."/>
            <person name="Felder M."/>
            <person name="Thangavelu M."/>
            <person name="Johnson D."/>
            <person name="Knights A."/>
            <person name="Loulseged H."/>
            <person name="Mungall K.L."/>
            <person name="Oliver K."/>
            <person name="Price C."/>
            <person name="Quail M.A."/>
            <person name="Urushihara H."/>
            <person name="Hernandez J."/>
            <person name="Rabbinowitsch E."/>
            <person name="Steffen D."/>
            <person name="Sanders M."/>
            <person name="Ma J."/>
            <person name="Kohara Y."/>
            <person name="Sharp S."/>
            <person name="Simmonds M.N."/>
            <person name="Spiegler S."/>
            <person name="Tivey A."/>
            <person name="Sugano S."/>
            <person name="White B."/>
            <person name="Walker D."/>
            <person name="Woodward J.R."/>
            <person name="Winckler T."/>
            <person name="Tanaka Y."/>
            <person name="Shaulsky G."/>
            <person name="Schleicher M."/>
            <person name="Weinstock G.M."/>
            <person name="Rosenthal A."/>
            <person name="Cox E.C."/>
            <person name="Chisholm R.L."/>
            <person name="Gibbs R.A."/>
            <person name="Loomis W.F."/>
            <person name="Platzer M."/>
            <person name="Kay R.R."/>
            <person name="Williams J.G."/>
            <person name="Dear P.H."/>
            <person name="Noegel A.A."/>
            <person name="Barrell B.G."/>
            <person name="Kuspa A."/>
        </authorList>
    </citation>
    <scope>NUCLEOTIDE SEQUENCE [LARGE SCALE GENOMIC DNA]</scope>
    <source>
        <strain>AX4</strain>
    </source>
</reference>
<organism>
    <name type="scientific">Dictyostelium discoideum</name>
    <name type="common">Social amoeba</name>
    <dbReference type="NCBI Taxonomy" id="44689"/>
    <lineage>
        <taxon>Eukaryota</taxon>
        <taxon>Amoebozoa</taxon>
        <taxon>Evosea</taxon>
        <taxon>Eumycetozoa</taxon>
        <taxon>Dictyostelia</taxon>
        <taxon>Dictyosteliales</taxon>
        <taxon>Dictyosteliaceae</taxon>
        <taxon>Dictyostelium</taxon>
    </lineage>
</organism>
<protein>
    <recommendedName>
        <fullName>Pre-mRNA-processing-splicing factor 8 homolog</fullName>
    </recommendedName>
    <alternativeName>
        <fullName>Splicing factor Prp8</fullName>
    </alternativeName>
</protein>
<gene>
    <name type="primary">prpf8</name>
    <name type="synonym">prp8</name>
    <name type="ORF">DDB_G0274229</name>
</gene>
<keyword id="KW-0507">mRNA processing</keyword>
<keyword id="KW-0508">mRNA splicing</keyword>
<keyword id="KW-0539">Nucleus</keyword>
<keyword id="KW-1185">Reference proteome</keyword>
<keyword id="KW-0687">Ribonucleoprotein</keyword>
<keyword id="KW-0694">RNA-binding</keyword>
<keyword id="KW-0747">Spliceosome</keyword>
<proteinExistence type="inferred from homology"/>
<feature type="chain" id="PRO_0000327448" description="Pre-mRNA-processing-splicing factor 8 homolog">
    <location>
        <begin position="1"/>
        <end position="2327"/>
    </location>
</feature>
<feature type="domain" description="MPN" evidence="3">
    <location>
        <begin position="2093"/>
        <end position="2223"/>
    </location>
</feature>
<feature type="region of interest" description="Disordered" evidence="4">
    <location>
        <begin position="1"/>
        <end position="20"/>
    </location>
</feature>
<feature type="region of interest" description="Reverse transcriptase homology domain">
    <location>
        <begin position="801"/>
        <end position="1292"/>
    </location>
</feature>
<feature type="region of interest" description="Linker">
    <location>
        <begin position="1293"/>
        <end position="1566"/>
    </location>
</feature>
<feature type="region of interest" description="Important for branch point selection" evidence="1">
    <location>
        <begin position="1502"/>
        <end position="1515"/>
    </location>
</feature>
<feature type="region of interest" description="Restriction endonuclease homology domain">
    <location>
        <begin position="1570"/>
        <end position="1740"/>
    </location>
</feature>
<feature type="region of interest" description="Involved in interaction with pre-mRNA 5' splice site" evidence="1">
    <location>
        <begin position="1657"/>
        <end position="2023"/>
    </location>
</feature>
<feature type="region of interest" description="RNase H homology domain">
    <location>
        <begin position="1755"/>
        <end position="2008"/>
    </location>
</feature>
<feature type="compositionally biased region" description="Polar residues" evidence="4">
    <location>
        <begin position="1"/>
        <end position="14"/>
    </location>
</feature>